<organism>
    <name type="scientific">Arabidopsis thaliana</name>
    <name type="common">Mouse-ear cress</name>
    <dbReference type="NCBI Taxonomy" id="3702"/>
    <lineage>
        <taxon>Eukaryota</taxon>
        <taxon>Viridiplantae</taxon>
        <taxon>Streptophyta</taxon>
        <taxon>Embryophyta</taxon>
        <taxon>Tracheophyta</taxon>
        <taxon>Spermatophyta</taxon>
        <taxon>Magnoliopsida</taxon>
        <taxon>eudicotyledons</taxon>
        <taxon>Gunneridae</taxon>
        <taxon>Pentapetalae</taxon>
        <taxon>rosids</taxon>
        <taxon>malvids</taxon>
        <taxon>Brassicales</taxon>
        <taxon>Brassicaceae</taxon>
        <taxon>Camelineae</taxon>
        <taxon>Arabidopsis</taxon>
    </lineage>
</organism>
<keyword id="KW-0106">Calcium</keyword>
<keyword id="KW-0325">Glycoprotein</keyword>
<keyword id="KW-0456">Lyase</keyword>
<keyword id="KW-0479">Metal-binding</keyword>
<keyword id="KW-1185">Reference proteome</keyword>
<keyword id="KW-0732">Signal</keyword>
<sequence>MMLQRSCIVLFFSLFLLVPQMVFSMLNRTLLLIPHPDPELVAYQVQWKVNASITRRQALDTTDQAGSTPCITGNPIDDCWKCDPNWPNNRQGLADCGIGFGQYALGGKGGQFYFVTDSSDDDAVNPKPGTLRYGVIQEEPLWIVFPSNMMIKLKQELIFNSYKTLDGRGANVHIVGGGCITLQYVSNIIIHNIHIHHCYQSGNTNVRSSPTHYGFRTKSDGDGISIFGSKDIWIDHCSLSRCKDGLIDAVMGSTGITISNNFFSHHNEVMLLGHSDHYEPDSGMQVTIAFNHFGEKLIQRMPRCRRGYIHVVNNDFTQWEMYAIGGSGNPTINSQGNRYTAPTNPFAKEVTKRVETPDGDWKGWNWRSEGDILVNGAFFVASGEGAEMRYEKAYSVEPKSASFITQITFHSGVLGVGGRNNNLGMWTTTGSEGTSGLDSYNDYTDEMSGAGSTNRLSFSVLVFLLSSISYLVVFTSSTQMFML</sequence>
<protein>
    <recommendedName>
        <fullName>Probable pectate lyase 12</fullName>
        <ecNumber>4.2.2.2</ecNumber>
    </recommendedName>
</protein>
<reference key="1">
    <citation type="journal article" date="2000" name="Nature">
        <title>Sequence and analysis of chromosome 3 of the plant Arabidopsis thaliana.</title>
        <authorList>
            <person name="Salanoubat M."/>
            <person name="Lemcke K."/>
            <person name="Rieger M."/>
            <person name="Ansorge W."/>
            <person name="Unseld M."/>
            <person name="Fartmann B."/>
            <person name="Valle G."/>
            <person name="Bloecker H."/>
            <person name="Perez-Alonso M."/>
            <person name="Obermaier B."/>
            <person name="Delseny M."/>
            <person name="Boutry M."/>
            <person name="Grivell L.A."/>
            <person name="Mache R."/>
            <person name="Puigdomenech P."/>
            <person name="De Simone V."/>
            <person name="Choisne N."/>
            <person name="Artiguenave F."/>
            <person name="Robert C."/>
            <person name="Brottier P."/>
            <person name="Wincker P."/>
            <person name="Cattolico L."/>
            <person name="Weissenbach J."/>
            <person name="Saurin W."/>
            <person name="Quetier F."/>
            <person name="Schaefer M."/>
            <person name="Mueller-Auer S."/>
            <person name="Gabel C."/>
            <person name="Fuchs M."/>
            <person name="Benes V."/>
            <person name="Wurmbach E."/>
            <person name="Drzonek H."/>
            <person name="Erfle H."/>
            <person name="Jordan N."/>
            <person name="Bangert S."/>
            <person name="Wiedelmann R."/>
            <person name="Kranz H."/>
            <person name="Voss H."/>
            <person name="Holland R."/>
            <person name="Brandt P."/>
            <person name="Nyakatura G."/>
            <person name="Vezzi A."/>
            <person name="D'Angelo M."/>
            <person name="Pallavicini A."/>
            <person name="Toppo S."/>
            <person name="Simionati B."/>
            <person name="Conrad A."/>
            <person name="Hornischer K."/>
            <person name="Kauer G."/>
            <person name="Loehnert T.-H."/>
            <person name="Nordsiek G."/>
            <person name="Reichelt J."/>
            <person name="Scharfe M."/>
            <person name="Schoen O."/>
            <person name="Bargues M."/>
            <person name="Terol J."/>
            <person name="Climent J."/>
            <person name="Navarro P."/>
            <person name="Collado C."/>
            <person name="Perez-Perez A."/>
            <person name="Ottenwaelder B."/>
            <person name="Duchemin D."/>
            <person name="Cooke R."/>
            <person name="Laudie M."/>
            <person name="Berger-Llauro C."/>
            <person name="Purnelle B."/>
            <person name="Masuy D."/>
            <person name="de Haan M."/>
            <person name="Maarse A.C."/>
            <person name="Alcaraz J.-P."/>
            <person name="Cottet A."/>
            <person name="Casacuberta E."/>
            <person name="Monfort A."/>
            <person name="Argiriou A."/>
            <person name="Flores M."/>
            <person name="Liguori R."/>
            <person name="Vitale D."/>
            <person name="Mannhaupt G."/>
            <person name="Haase D."/>
            <person name="Schoof H."/>
            <person name="Rudd S."/>
            <person name="Zaccaria P."/>
            <person name="Mewes H.-W."/>
            <person name="Mayer K.F.X."/>
            <person name="Kaul S."/>
            <person name="Town C.D."/>
            <person name="Koo H.L."/>
            <person name="Tallon L.J."/>
            <person name="Jenkins J."/>
            <person name="Rooney T."/>
            <person name="Rizzo M."/>
            <person name="Walts A."/>
            <person name="Utterback T."/>
            <person name="Fujii C.Y."/>
            <person name="Shea T.P."/>
            <person name="Creasy T.H."/>
            <person name="Haas B."/>
            <person name="Maiti R."/>
            <person name="Wu D."/>
            <person name="Peterson J."/>
            <person name="Van Aken S."/>
            <person name="Pai G."/>
            <person name="Militscher J."/>
            <person name="Sellers P."/>
            <person name="Gill J.E."/>
            <person name="Feldblyum T.V."/>
            <person name="Preuss D."/>
            <person name="Lin X."/>
            <person name="Nierman W.C."/>
            <person name="Salzberg S.L."/>
            <person name="White O."/>
            <person name="Venter J.C."/>
            <person name="Fraser C.M."/>
            <person name="Kaneko T."/>
            <person name="Nakamura Y."/>
            <person name="Sato S."/>
            <person name="Kato T."/>
            <person name="Asamizu E."/>
            <person name="Sasamoto S."/>
            <person name="Kimura T."/>
            <person name="Idesawa K."/>
            <person name="Kawashima K."/>
            <person name="Kishida Y."/>
            <person name="Kiyokawa C."/>
            <person name="Kohara M."/>
            <person name="Matsumoto M."/>
            <person name="Matsuno A."/>
            <person name="Muraki A."/>
            <person name="Nakayama S."/>
            <person name="Nakazaki N."/>
            <person name="Shinpo S."/>
            <person name="Takeuchi C."/>
            <person name="Wada T."/>
            <person name="Watanabe A."/>
            <person name="Yamada M."/>
            <person name="Yasuda M."/>
            <person name="Tabata S."/>
        </authorList>
    </citation>
    <scope>NUCLEOTIDE SEQUENCE [LARGE SCALE GENOMIC DNA]</scope>
    <source>
        <strain>cv. Columbia</strain>
    </source>
</reference>
<reference key="2">
    <citation type="journal article" date="2017" name="Plant J.">
        <title>Araport11: a complete reannotation of the Arabidopsis thaliana reference genome.</title>
        <authorList>
            <person name="Cheng C.Y."/>
            <person name="Krishnakumar V."/>
            <person name="Chan A.P."/>
            <person name="Thibaud-Nissen F."/>
            <person name="Schobel S."/>
            <person name="Town C.D."/>
        </authorList>
    </citation>
    <scope>GENOME REANNOTATION</scope>
    <source>
        <strain>cv. Columbia</strain>
    </source>
</reference>
<reference key="3">
    <citation type="submission" date="2002-03" db="EMBL/GenBank/DDBJ databases">
        <title>Full-length cDNA from Arabidopsis thaliana.</title>
        <authorList>
            <person name="Brover V.V."/>
            <person name="Troukhan M.E."/>
            <person name="Alexandrov N.A."/>
            <person name="Lu Y.-P."/>
            <person name="Flavell R.B."/>
            <person name="Feldmann K.A."/>
        </authorList>
    </citation>
    <scope>NUCLEOTIDE SEQUENCE [LARGE SCALE MRNA]</scope>
</reference>
<comment type="catalytic activity">
    <reaction>
        <text>Eliminative cleavage of (1-&gt;4)-alpha-D-galacturonan to give oligosaccharides with 4-deoxy-alpha-D-galact-4-enuronosyl groups at their non-reducing ends.</text>
        <dbReference type="EC" id="4.2.2.2"/>
    </reaction>
</comment>
<comment type="cofactor">
    <cofactor evidence="1">
        <name>Ca(2+)</name>
        <dbReference type="ChEBI" id="CHEBI:29108"/>
    </cofactor>
    <text evidence="1">Binds 1 Ca(2+) ion. Required for its activity.</text>
</comment>
<comment type="pathway">
    <text>Glycan metabolism; pectin degradation; 2-dehydro-3-deoxy-D-gluconate from pectin: step 2/5.</text>
</comment>
<comment type="similarity">
    <text evidence="3">Belongs to the polysaccharide lyase 1 family.</text>
</comment>
<comment type="caution">
    <text evidence="3">It is uncertain whether Met-1 or Met-2 is the initiator.</text>
</comment>
<comment type="sequence caution" evidence="3">
    <conflict type="erroneous initiation">
        <sequence resource="EMBL-CDS" id="AAM61400"/>
    </conflict>
</comment>
<comment type="sequence caution" evidence="3">
    <conflict type="erroneous initiation">
        <sequence resource="EMBL-CDS" id="CAB64222"/>
    </conflict>
</comment>
<proteinExistence type="evidence at transcript level"/>
<accession>Q9SCP2</accession>
<accession>Q8LFH8</accession>
<gene>
    <name type="ordered locus">At3g53190</name>
    <name type="ORF">T4D2.120</name>
</gene>
<name>PLY12_ARATH</name>
<dbReference type="EC" id="4.2.2.2"/>
<dbReference type="EMBL" id="AL132958">
    <property type="protein sequence ID" value="CAB64222.1"/>
    <property type="status" value="ALT_INIT"/>
    <property type="molecule type" value="Genomic_DNA"/>
</dbReference>
<dbReference type="EMBL" id="CP002686">
    <property type="protein sequence ID" value="AEE79046.1"/>
    <property type="molecule type" value="Genomic_DNA"/>
</dbReference>
<dbReference type="EMBL" id="AY084835">
    <property type="protein sequence ID" value="AAM61400.1"/>
    <property type="status" value="ALT_INIT"/>
    <property type="molecule type" value="mRNA"/>
</dbReference>
<dbReference type="PIR" id="T46165">
    <property type="entry name" value="T46165"/>
</dbReference>
<dbReference type="RefSeq" id="NP_566979.1">
    <property type="nucleotide sequence ID" value="NM_115179.5"/>
</dbReference>
<dbReference type="SMR" id="Q9SCP2"/>
<dbReference type="BioGRID" id="9802">
    <property type="interactions" value="16"/>
</dbReference>
<dbReference type="FunCoup" id="Q9SCP2">
    <property type="interactions" value="203"/>
</dbReference>
<dbReference type="IntAct" id="Q9SCP2">
    <property type="interactions" value="15"/>
</dbReference>
<dbReference type="STRING" id="3702.Q9SCP2"/>
<dbReference type="CAZy" id="PL1">
    <property type="family name" value="Polysaccharide Lyase Family 1"/>
</dbReference>
<dbReference type="GlyGen" id="Q9SCP2">
    <property type="glycosylation" value="2 sites"/>
</dbReference>
<dbReference type="PaxDb" id="3702-AT3G53190.1"/>
<dbReference type="ProteomicsDB" id="234937"/>
<dbReference type="EnsemblPlants" id="AT3G53190.1">
    <property type="protein sequence ID" value="AT3G53190.1"/>
    <property type="gene ID" value="AT3G53190"/>
</dbReference>
<dbReference type="GeneID" id="824485"/>
<dbReference type="Gramene" id="AT3G53190.1">
    <property type="protein sequence ID" value="AT3G53190.1"/>
    <property type="gene ID" value="AT3G53190"/>
</dbReference>
<dbReference type="KEGG" id="ath:AT3G53190"/>
<dbReference type="Araport" id="AT3G53190"/>
<dbReference type="TAIR" id="AT3G53190"/>
<dbReference type="eggNOG" id="ENOG502QPY9">
    <property type="taxonomic scope" value="Eukaryota"/>
</dbReference>
<dbReference type="HOGENOM" id="CLU_026608_0_0_1"/>
<dbReference type="InParanoid" id="Q9SCP2"/>
<dbReference type="OMA" id="IHVHHCY"/>
<dbReference type="PhylomeDB" id="Q9SCP2"/>
<dbReference type="BioCyc" id="ARA:AT3G53190-MONOMER"/>
<dbReference type="UniPathway" id="UPA00545">
    <property type="reaction ID" value="UER00824"/>
</dbReference>
<dbReference type="PRO" id="PR:Q9SCP2"/>
<dbReference type="Proteomes" id="UP000006548">
    <property type="component" value="Chromosome 3"/>
</dbReference>
<dbReference type="ExpressionAtlas" id="Q9SCP2">
    <property type="expression patterns" value="baseline and differential"/>
</dbReference>
<dbReference type="GO" id="GO:0046872">
    <property type="term" value="F:metal ion binding"/>
    <property type="evidence" value="ECO:0007669"/>
    <property type="project" value="UniProtKB-KW"/>
</dbReference>
<dbReference type="GO" id="GO:0030570">
    <property type="term" value="F:pectate lyase activity"/>
    <property type="evidence" value="ECO:0007669"/>
    <property type="project" value="UniProtKB-EC"/>
</dbReference>
<dbReference type="GO" id="GO:0045490">
    <property type="term" value="P:pectin catabolic process"/>
    <property type="evidence" value="ECO:0007669"/>
    <property type="project" value="UniProtKB-UniPathway"/>
</dbReference>
<dbReference type="FunFam" id="2.160.20.10:FF:000009">
    <property type="entry name" value="Pectate lyase"/>
    <property type="match status" value="1"/>
</dbReference>
<dbReference type="Gene3D" id="2.160.20.10">
    <property type="entry name" value="Single-stranded right-handed beta-helix, Pectin lyase-like"/>
    <property type="match status" value="1"/>
</dbReference>
<dbReference type="InterPro" id="IPR018082">
    <property type="entry name" value="AmbAllergen"/>
</dbReference>
<dbReference type="InterPro" id="IPR002022">
    <property type="entry name" value="Pec_lyase"/>
</dbReference>
<dbReference type="InterPro" id="IPR012334">
    <property type="entry name" value="Pectin_lyas_fold"/>
</dbReference>
<dbReference type="InterPro" id="IPR011050">
    <property type="entry name" value="Pectin_lyase_fold/virulence"/>
</dbReference>
<dbReference type="InterPro" id="IPR045032">
    <property type="entry name" value="PEL"/>
</dbReference>
<dbReference type="PANTHER" id="PTHR31683:SF21">
    <property type="entry name" value="PECTATE LYASE 12-RELATED"/>
    <property type="match status" value="1"/>
</dbReference>
<dbReference type="PANTHER" id="PTHR31683">
    <property type="entry name" value="PECTATE LYASE 18-RELATED"/>
    <property type="match status" value="1"/>
</dbReference>
<dbReference type="Pfam" id="PF00544">
    <property type="entry name" value="Pectate_lyase_4"/>
    <property type="match status" value="1"/>
</dbReference>
<dbReference type="PRINTS" id="PR00807">
    <property type="entry name" value="AMBALLERGEN"/>
</dbReference>
<dbReference type="SMART" id="SM00656">
    <property type="entry name" value="Amb_all"/>
    <property type="match status" value="1"/>
</dbReference>
<dbReference type="SUPFAM" id="SSF51126">
    <property type="entry name" value="Pectin lyase-like"/>
    <property type="match status" value="1"/>
</dbReference>
<feature type="signal peptide" evidence="2">
    <location>
        <begin position="1"/>
        <end position="24"/>
    </location>
</feature>
<feature type="chain" id="PRO_0000024876" description="Probable pectate lyase 12">
    <location>
        <begin position="25"/>
        <end position="483"/>
    </location>
</feature>
<feature type="active site" evidence="2">
    <location>
        <position position="300"/>
    </location>
</feature>
<feature type="binding site" evidence="1">
    <location>
        <position position="220"/>
    </location>
    <ligand>
        <name>Ca(2+)</name>
        <dbReference type="ChEBI" id="CHEBI:29108"/>
    </ligand>
</feature>
<feature type="binding site" evidence="1">
    <location>
        <position position="244"/>
    </location>
    <ligand>
        <name>Ca(2+)</name>
        <dbReference type="ChEBI" id="CHEBI:29108"/>
    </ligand>
</feature>
<feature type="binding site" evidence="1">
    <location>
        <position position="248"/>
    </location>
    <ligand>
        <name>Ca(2+)</name>
        <dbReference type="ChEBI" id="CHEBI:29108"/>
    </ligand>
</feature>
<feature type="glycosylation site" description="N-linked (GlcNAc...) asparagine" evidence="2">
    <location>
        <position position="27"/>
    </location>
</feature>
<feature type="glycosylation site" description="N-linked (GlcNAc...) asparagine" evidence="2">
    <location>
        <position position="50"/>
    </location>
</feature>
<feature type="sequence conflict" description="In Ref. 3; AAM61400." evidence="3" ref="3">
    <original>L</original>
    <variation>F</variation>
    <location>
        <position position="17"/>
    </location>
</feature>
<feature type="sequence conflict" description="In Ref. 3; AAM61400." evidence="3" ref="3">
    <original>MV</original>
    <variation>KG</variation>
    <location>
        <begin position="21"/>
        <end position="22"/>
    </location>
</feature>
<feature type="sequence conflict" description="In Ref. 3; AAM61400." evidence="3" ref="3">
    <original>M</original>
    <variation>I</variation>
    <location>
        <position position="25"/>
    </location>
</feature>
<feature type="sequence conflict" description="In Ref. 3; AAM61400." evidence="3" ref="3">
    <original>R</original>
    <variation>T</variation>
    <location>
        <position position="28"/>
    </location>
</feature>
<feature type="sequence conflict" description="In Ref. 3; AAM61400." evidence="3" ref="3">
    <original>I</original>
    <variation>V</variation>
    <location>
        <position position="33"/>
    </location>
</feature>
<evidence type="ECO:0000250" key="1"/>
<evidence type="ECO:0000255" key="2"/>
<evidence type="ECO:0000305" key="3"/>